<sequence>MKIINILFCLFLLLLNSCNSNDNDTLKNNAQQTKSRGKRDLTQKEATPEKPKSKEELLREKLSEDQKTHLDWLKEALGNDGEFDKFLGYDESKIKTALDHIKSELDKCNGNDADQQKTTFKQTVQGALSGGIDGFGSNNAVTTCGNGS</sequence>
<name>MLPA_BORBU</name>
<keyword id="KW-0002">3D-structure</keyword>
<keyword id="KW-0998">Cell outer membrane</keyword>
<keyword id="KW-0449">Lipoprotein</keyword>
<keyword id="KW-0472">Membrane</keyword>
<keyword id="KW-0564">Palmitate</keyword>
<keyword id="KW-0614">Plasmid</keyword>
<keyword id="KW-1185">Reference proteome</keyword>
<keyword id="KW-0732">Signal</keyword>
<dbReference type="EMBL" id="AE001575">
    <property type="protein sequence ID" value="AAF07417.1"/>
    <property type="molecule type" value="Genomic_DNA"/>
</dbReference>
<dbReference type="RefSeq" id="NP_051189.1">
    <property type="nucleotide sequence ID" value="NC_000948.1"/>
</dbReference>
<dbReference type="RefSeq" id="WP_010883731.1">
    <property type="nucleotide sequence ID" value="NC_000948.1"/>
</dbReference>
<dbReference type="PDB" id="6QBI">
    <property type="method" value="NMR"/>
    <property type="chains" value="A=51-148"/>
</dbReference>
<dbReference type="PDBsum" id="6QBI"/>
<dbReference type="BMRB" id="H7C7P1"/>
<dbReference type="SMR" id="H7C7P1"/>
<dbReference type="EnsemblBacteria" id="AAF07417">
    <property type="protein sequence ID" value="AAF07417"/>
    <property type="gene ID" value="BB_P28"/>
</dbReference>
<dbReference type="KEGG" id="bbu:BB_P28"/>
<dbReference type="PATRIC" id="fig|224326.49.peg.28"/>
<dbReference type="HOGENOM" id="CLU_134260_0_0_12"/>
<dbReference type="OrthoDB" id="351076at2"/>
<dbReference type="Proteomes" id="UP000001807">
    <property type="component" value="Plasmid cp32-1"/>
</dbReference>
<dbReference type="GO" id="GO:0009279">
    <property type="term" value="C:cell outer membrane"/>
    <property type="evidence" value="ECO:0007669"/>
    <property type="project" value="UniProtKB-SubCell"/>
</dbReference>
<dbReference type="InterPro" id="IPR004983">
    <property type="entry name" value="Mlp"/>
</dbReference>
<dbReference type="Pfam" id="PF03304">
    <property type="entry name" value="Mlp"/>
    <property type="match status" value="1"/>
</dbReference>
<geneLocation type="plasmid">
    <name>cp32-1</name>
</geneLocation>
<organism>
    <name type="scientific">Borreliella burgdorferi (strain ATCC 35210 / DSM 4680 / CIP 102532 / B31)</name>
    <name type="common">Borrelia burgdorferi</name>
    <dbReference type="NCBI Taxonomy" id="224326"/>
    <lineage>
        <taxon>Bacteria</taxon>
        <taxon>Pseudomonadati</taxon>
        <taxon>Spirochaetota</taxon>
        <taxon>Spirochaetia</taxon>
        <taxon>Spirochaetales</taxon>
        <taxon>Borreliaceae</taxon>
        <taxon>Borreliella</taxon>
    </lineage>
</organism>
<reference key="1">
    <citation type="journal article" date="1997" name="Nature">
        <title>Genomic sequence of a Lyme disease spirochaete, Borrelia burgdorferi.</title>
        <authorList>
            <person name="Fraser C.M."/>
            <person name="Casjens S."/>
            <person name="Huang W.M."/>
            <person name="Sutton G.G."/>
            <person name="Clayton R.A."/>
            <person name="Lathigra R."/>
            <person name="White O."/>
            <person name="Ketchum K.A."/>
            <person name="Dodson R.J."/>
            <person name="Hickey E.K."/>
            <person name="Gwinn M.L."/>
            <person name="Dougherty B.A."/>
            <person name="Tomb J.-F."/>
            <person name="Fleischmann R.D."/>
            <person name="Richardson D.L."/>
            <person name="Peterson J.D."/>
            <person name="Kerlavage A.R."/>
            <person name="Quackenbush J."/>
            <person name="Salzberg S.L."/>
            <person name="Hanson M."/>
            <person name="van Vugt R."/>
            <person name="Palmer N."/>
            <person name="Adams M.D."/>
            <person name="Gocayne J.D."/>
            <person name="Weidman J.F."/>
            <person name="Utterback T.R."/>
            <person name="Watthey L."/>
            <person name="McDonald L.A."/>
            <person name="Artiach P."/>
            <person name="Bowman C."/>
            <person name="Garland S.A."/>
            <person name="Fujii C."/>
            <person name="Cotton M.D."/>
            <person name="Horst K."/>
            <person name="Roberts K.M."/>
            <person name="Hatch B."/>
            <person name="Smith H.O."/>
            <person name="Venter J.C."/>
        </authorList>
    </citation>
    <scope>NUCLEOTIDE SEQUENCE [LARGE SCALE GENOMIC DNA]</scope>
    <source>
        <strain>ATCC 35210 / DSM 4680 / CIP 102532 / B31</strain>
    </source>
</reference>
<reference key="2">
    <citation type="journal article" date="2000" name="Mol. Microbiol.">
        <title>A bacterial genome in flux: the twelve linear and nine circular extrachromosomal DNAs in an infectious isolate of the Lyme disease spirochete Borrelia burgdorferi.</title>
        <authorList>
            <person name="Casjens S."/>
            <person name="Palmer N."/>
            <person name="van Vugt R."/>
            <person name="Huang W.M."/>
            <person name="Stevenson B."/>
            <person name="Rosa P."/>
            <person name="Lathigra R."/>
            <person name="Sutton G.G."/>
            <person name="Peterson J.D."/>
            <person name="Dodson R.J."/>
            <person name="Haft D.H."/>
            <person name="Hickey E.K."/>
            <person name="Gwinn M.L."/>
            <person name="White O."/>
            <person name="Fraser C.M."/>
        </authorList>
    </citation>
    <scope>NUCLEOTIDE SEQUENCE [LARGE SCALE GENOMIC DNA]</scope>
    <source>
        <strain>ATCC 35210 / DSM 4680 / CIP 102532 / B31</strain>
    </source>
</reference>
<reference key="3">
    <citation type="journal article" date="2000" name="Infect. Immun.">
        <title>Expression and immunological analysis of the plasmid-borne mlp genes of Borrelia burgdorferi strain B31.</title>
        <authorList>
            <person name="Porcella S.F."/>
            <person name="Fitzpatrick C.A."/>
            <person name="Bono J.L."/>
        </authorList>
    </citation>
    <scope>FUNCTION</scope>
    <scope>ANTIGENICITY</scope>
    <scope>SUBCELLULAR LOCATION</scope>
    <scope>INDUCTION AT 35 DEGREES CELSIUS</scope>
    <source>
        <strain>B31-4A</strain>
        <plasmid>cp32-1</plasmid>
    </source>
</reference>
<gene>
    <name type="primary">mlpA</name>
    <name type="ordered locus">BB_P28</name>
</gene>
<feature type="signal peptide" evidence="4">
    <location>
        <begin position="1"/>
        <end position="17"/>
    </location>
</feature>
<feature type="chain" id="PRO_5003609303" description="Lipoprotein MlpA" evidence="4">
    <location>
        <begin position="18"/>
        <end position="148"/>
    </location>
</feature>
<feature type="region of interest" description="Disordered" evidence="1">
    <location>
        <begin position="26"/>
        <end position="58"/>
    </location>
</feature>
<feature type="compositionally biased region" description="Basic and acidic residues" evidence="1">
    <location>
        <begin position="38"/>
        <end position="58"/>
    </location>
</feature>
<feature type="lipid moiety-binding region" description="N-palmitoyl cysteine" evidence="4">
    <location>
        <position position="18"/>
    </location>
</feature>
<feature type="lipid moiety-binding region" description="S-diacylglycerol cysteine" evidence="4">
    <location>
        <position position="18"/>
    </location>
</feature>
<feature type="helix" evidence="6">
    <location>
        <begin position="54"/>
        <end position="61"/>
    </location>
</feature>
<feature type="helix" evidence="6">
    <location>
        <begin position="64"/>
        <end position="77"/>
    </location>
</feature>
<feature type="helix" evidence="6">
    <location>
        <begin position="80"/>
        <end position="87"/>
    </location>
</feature>
<feature type="helix" evidence="6">
    <location>
        <begin position="91"/>
        <end position="106"/>
    </location>
</feature>
<feature type="strand" evidence="6">
    <location>
        <begin position="110"/>
        <end position="112"/>
    </location>
</feature>
<feature type="helix" evidence="6">
    <location>
        <begin position="113"/>
        <end position="125"/>
    </location>
</feature>
<feature type="strand" evidence="6">
    <location>
        <begin position="128"/>
        <end position="130"/>
    </location>
</feature>
<feature type="turn" evidence="6">
    <location>
        <begin position="137"/>
        <end position="139"/>
    </location>
</feature>
<feature type="turn" evidence="6">
    <location>
        <begin position="143"/>
        <end position="145"/>
    </location>
</feature>
<evidence type="ECO:0000256" key="1">
    <source>
        <dbReference type="SAM" id="MobiDB-lite"/>
    </source>
</evidence>
<evidence type="ECO:0000269" key="2">
    <source>
    </source>
</evidence>
<evidence type="ECO:0000303" key="3">
    <source>
    </source>
</evidence>
<evidence type="ECO:0000305" key="4"/>
<evidence type="ECO:0000305" key="5">
    <source>
    </source>
</evidence>
<evidence type="ECO:0007829" key="6">
    <source>
        <dbReference type="PDB" id="6QBI"/>
    </source>
</evidence>
<accession>H7C7P1</accession>
<protein>
    <recommendedName>
        <fullName evidence="3">Lipoprotein MlpA</fullName>
    </recommendedName>
</protein>
<comment type="function">
    <text evidence="2 5">An outer membrane protein that may participate in pathogenesis. Some human Lyme disease patients have antibodies against this protein (PubMed:10948116). The Mlp proteins probably undergo intragenic recombination, generating new alleles (Probable).</text>
</comment>
<comment type="subcellular location">
    <subcellularLocation>
        <location evidence="5">Cell outer membrane</location>
        <topology evidence="5">Lipid-anchor</topology>
    </subcellularLocation>
</comment>
<comment type="induction">
    <text evidence="2">Strongly induced when grown at 35 degrees Celsius.</text>
</comment>
<comment type="similarity">
    <text evidence="4">Belongs to the Multicopy lipoprotein (Mlp) family.</text>
</comment>
<proteinExistence type="evidence at protein level"/>